<name>MURQ_PROMA</name>
<keyword id="KW-0119">Carbohydrate metabolism</keyword>
<keyword id="KW-0456">Lyase</keyword>
<keyword id="KW-1185">Reference proteome</keyword>
<gene>
    <name evidence="1" type="primary">murQ</name>
    <name type="ordered locus">Pro_0941</name>
</gene>
<reference key="1">
    <citation type="journal article" date="2003" name="Proc. Natl. Acad. Sci. U.S.A.">
        <title>Genome sequence of the cyanobacterium Prochlorococcus marinus SS120, a nearly minimal oxyphototrophic genome.</title>
        <authorList>
            <person name="Dufresne A."/>
            <person name="Salanoubat M."/>
            <person name="Partensky F."/>
            <person name="Artiguenave F."/>
            <person name="Axmann I.M."/>
            <person name="Barbe V."/>
            <person name="Duprat S."/>
            <person name="Galperin M.Y."/>
            <person name="Koonin E.V."/>
            <person name="Le Gall F."/>
            <person name="Makarova K.S."/>
            <person name="Ostrowski M."/>
            <person name="Oztas S."/>
            <person name="Robert C."/>
            <person name="Rogozin I.B."/>
            <person name="Scanlan D.J."/>
            <person name="Tandeau de Marsac N."/>
            <person name="Weissenbach J."/>
            <person name="Wincker P."/>
            <person name="Wolf Y.I."/>
            <person name="Hess W.R."/>
        </authorList>
    </citation>
    <scope>NUCLEOTIDE SEQUENCE [LARGE SCALE GENOMIC DNA]</scope>
    <source>
        <strain>SARG / CCMP1375 / SS120</strain>
    </source>
</reference>
<accession>Q7VC01</accession>
<dbReference type="EC" id="4.2.1.126" evidence="1"/>
<dbReference type="EMBL" id="AE017126">
    <property type="protein sequence ID" value="AAP99985.1"/>
    <property type="molecule type" value="Genomic_DNA"/>
</dbReference>
<dbReference type="RefSeq" id="NP_875333.1">
    <property type="nucleotide sequence ID" value="NC_005042.1"/>
</dbReference>
<dbReference type="RefSeq" id="WP_011125093.1">
    <property type="nucleotide sequence ID" value="NC_005042.1"/>
</dbReference>
<dbReference type="SMR" id="Q7VC01"/>
<dbReference type="STRING" id="167539.Pro_0941"/>
<dbReference type="EnsemblBacteria" id="AAP99985">
    <property type="protein sequence ID" value="AAP99985"/>
    <property type="gene ID" value="Pro_0941"/>
</dbReference>
<dbReference type="KEGG" id="pma:Pro_0941"/>
<dbReference type="PATRIC" id="fig|167539.5.peg.990"/>
<dbReference type="eggNOG" id="COG2103">
    <property type="taxonomic scope" value="Bacteria"/>
</dbReference>
<dbReference type="HOGENOM" id="CLU_049049_1_1_3"/>
<dbReference type="OrthoDB" id="9813395at2"/>
<dbReference type="UniPathway" id="UPA00342"/>
<dbReference type="Proteomes" id="UP000001420">
    <property type="component" value="Chromosome"/>
</dbReference>
<dbReference type="GO" id="GO:0097367">
    <property type="term" value="F:carbohydrate derivative binding"/>
    <property type="evidence" value="ECO:0007669"/>
    <property type="project" value="InterPro"/>
</dbReference>
<dbReference type="GO" id="GO:0016835">
    <property type="term" value="F:carbon-oxygen lyase activity"/>
    <property type="evidence" value="ECO:0007669"/>
    <property type="project" value="UniProtKB-UniRule"/>
</dbReference>
<dbReference type="GO" id="GO:0016803">
    <property type="term" value="F:ether hydrolase activity"/>
    <property type="evidence" value="ECO:0007669"/>
    <property type="project" value="TreeGrafter"/>
</dbReference>
<dbReference type="GO" id="GO:0046348">
    <property type="term" value="P:amino sugar catabolic process"/>
    <property type="evidence" value="ECO:0007669"/>
    <property type="project" value="InterPro"/>
</dbReference>
<dbReference type="GO" id="GO:0097173">
    <property type="term" value="P:N-acetylmuramic acid catabolic process"/>
    <property type="evidence" value="ECO:0007669"/>
    <property type="project" value="UniProtKB-UniPathway"/>
</dbReference>
<dbReference type="GO" id="GO:0009254">
    <property type="term" value="P:peptidoglycan turnover"/>
    <property type="evidence" value="ECO:0007669"/>
    <property type="project" value="TreeGrafter"/>
</dbReference>
<dbReference type="CDD" id="cd05007">
    <property type="entry name" value="SIS_Etherase"/>
    <property type="match status" value="1"/>
</dbReference>
<dbReference type="Gene3D" id="1.10.8.1080">
    <property type="match status" value="1"/>
</dbReference>
<dbReference type="Gene3D" id="3.40.50.10490">
    <property type="entry name" value="Glucose-6-phosphate isomerase like protein, domain 1"/>
    <property type="match status" value="1"/>
</dbReference>
<dbReference type="HAMAP" id="MF_00068">
    <property type="entry name" value="MurQ"/>
    <property type="match status" value="1"/>
</dbReference>
<dbReference type="InterPro" id="IPR005488">
    <property type="entry name" value="Etherase_MurQ"/>
</dbReference>
<dbReference type="InterPro" id="IPR005486">
    <property type="entry name" value="Glucokinase_regulatory_CS"/>
</dbReference>
<dbReference type="InterPro" id="IPR040190">
    <property type="entry name" value="MURQ/GCKR"/>
</dbReference>
<dbReference type="InterPro" id="IPR001347">
    <property type="entry name" value="SIS_dom"/>
</dbReference>
<dbReference type="InterPro" id="IPR046348">
    <property type="entry name" value="SIS_dom_sf"/>
</dbReference>
<dbReference type="NCBIfam" id="TIGR00274">
    <property type="entry name" value="N-acetylmuramic acid 6-phosphate etherase"/>
    <property type="match status" value="1"/>
</dbReference>
<dbReference type="NCBIfam" id="NF003915">
    <property type="entry name" value="PRK05441.1"/>
    <property type="match status" value="1"/>
</dbReference>
<dbReference type="NCBIfam" id="NF009222">
    <property type="entry name" value="PRK12570.1"/>
    <property type="match status" value="1"/>
</dbReference>
<dbReference type="PANTHER" id="PTHR10088">
    <property type="entry name" value="GLUCOKINASE REGULATORY PROTEIN"/>
    <property type="match status" value="1"/>
</dbReference>
<dbReference type="PANTHER" id="PTHR10088:SF4">
    <property type="entry name" value="GLUCOKINASE REGULATORY PROTEIN"/>
    <property type="match status" value="1"/>
</dbReference>
<dbReference type="Pfam" id="PF20741">
    <property type="entry name" value="GKRP-like_C"/>
    <property type="match status" value="1"/>
</dbReference>
<dbReference type="Pfam" id="PF22645">
    <property type="entry name" value="GKRP_SIS_N"/>
    <property type="match status" value="1"/>
</dbReference>
<dbReference type="SUPFAM" id="SSF53697">
    <property type="entry name" value="SIS domain"/>
    <property type="match status" value="1"/>
</dbReference>
<dbReference type="PROSITE" id="PS01272">
    <property type="entry name" value="GCKR"/>
    <property type="match status" value="1"/>
</dbReference>
<dbReference type="PROSITE" id="PS51464">
    <property type="entry name" value="SIS"/>
    <property type="match status" value="1"/>
</dbReference>
<organism>
    <name type="scientific">Prochlorococcus marinus (strain SARG / CCMP1375 / SS120)</name>
    <dbReference type="NCBI Taxonomy" id="167539"/>
    <lineage>
        <taxon>Bacteria</taxon>
        <taxon>Bacillati</taxon>
        <taxon>Cyanobacteriota</taxon>
        <taxon>Cyanophyceae</taxon>
        <taxon>Synechococcales</taxon>
        <taxon>Prochlorococcaceae</taxon>
        <taxon>Prochlorococcus</taxon>
    </lineage>
</organism>
<proteinExistence type="inferred from homology"/>
<evidence type="ECO:0000255" key="1">
    <source>
        <dbReference type="HAMAP-Rule" id="MF_00068"/>
    </source>
</evidence>
<protein>
    <recommendedName>
        <fullName evidence="1">N-acetylmuramic acid 6-phosphate etherase</fullName>
        <shortName evidence="1">MurNAc-6-P etherase</shortName>
        <ecNumber evidence="1">4.2.1.126</ecNumber>
    </recommendedName>
    <alternativeName>
        <fullName evidence="1">N-acetylmuramic acid 6-phosphate hydrolase</fullName>
    </alternativeName>
    <alternativeName>
        <fullName evidence="1">N-acetylmuramic acid 6-phosphate lyase</fullName>
    </alternativeName>
</protein>
<comment type="function">
    <text evidence="1">Specifically catalyzes the cleavage of the D-lactyl ether substituent of MurNAc 6-phosphate, producing GlcNAc 6-phosphate and D-lactate.</text>
</comment>
<comment type="catalytic activity">
    <reaction evidence="1">
        <text>N-acetyl-D-muramate 6-phosphate + H2O = N-acetyl-D-glucosamine 6-phosphate + (R)-lactate</text>
        <dbReference type="Rhea" id="RHEA:26410"/>
        <dbReference type="ChEBI" id="CHEBI:15377"/>
        <dbReference type="ChEBI" id="CHEBI:16004"/>
        <dbReference type="ChEBI" id="CHEBI:57513"/>
        <dbReference type="ChEBI" id="CHEBI:58722"/>
        <dbReference type="EC" id="4.2.1.126"/>
    </reaction>
</comment>
<comment type="pathway">
    <text evidence="1">Amino-sugar metabolism; N-acetylmuramate degradation.</text>
</comment>
<comment type="subunit">
    <text evidence="1">Homodimer.</text>
</comment>
<comment type="miscellaneous">
    <text evidence="1">A lyase-type mechanism (elimination/hydration) is suggested for the cleavage of the lactyl ether bond of MurNAc 6-phosphate, with the formation of an alpha,beta-unsaturated aldehyde intermediate with (E)-stereochemistry, followed by the syn addition of water to give product.</text>
</comment>
<comment type="similarity">
    <text evidence="1">Belongs to the GCKR-like family. MurNAc-6-P etherase subfamily.</text>
</comment>
<sequence length="311" mass="33825">MKNYNLSDNINRSNILTEESNHLSKNIDTVSTSKLVDIFVEEDKKPQQAISQAKHQITKSIDLIYQRLIDNGRLFYIGAGTSGRIAVLDAVECPPTFCTSPELVQAVIAGGSSSLINSSEEKEDSNSLSIKDLKERNFSSKDCLIGITAGGTTPYVLSGLNYARNIGALNIAITSVPEQQASFGSNITIRLITGPEIIAGSTRLKAGTATKMALNIISSGVMIKLGKVFDNKMIDVSISNKKLFDRALRITSSLLNIEMKEAQLLLDQAKGSIKVACIIKSSGMDQKSAFALLERNNHNLRKALKDINIEF</sequence>
<feature type="chain" id="PRO_0000249641" description="N-acetylmuramic acid 6-phosphate etherase">
    <location>
        <begin position="1"/>
        <end position="311"/>
    </location>
</feature>
<feature type="domain" description="SIS" evidence="1">
    <location>
        <begin position="64"/>
        <end position="227"/>
    </location>
</feature>
<feature type="active site" description="Proton donor" evidence="1">
    <location>
        <position position="92"/>
    </location>
</feature>
<feature type="active site" evidence="1">
    <location>
        <position position="123"/>
    </location>
</feature>